<name>COX5B_SOLTU</name>
<reference key="1">
    <citation type="journal article" date="1996" name="Plant J.">
        <title>New insights into the composition, molecular mass and stoichiometry of the protein complexes of plant mitochondria.</title>
        <authorList>
            <person name="Jansch L."/>
            <person name="Kruft V."/>
            <person name="Schmitz U.K."/>
            <person name="Braun H.P."/>
        </authorList>
    </citation>
    <scope>PROTEIN SEQUENCE</scope>
    <source>
        <tissue>Tuber</tissue>
    </source>
</reference>
<organism>
    <name type="scientific">Solanum tuberosum</name>
    <name type="common">Potato</name>
    <dbReference type="NCBI Taxonomy" id="4113"/>
    <lineage>
        <taxon>Eukaryota</taxon>
        <taxon>Viridiplantae</taxon>
        <taxon>Streptophyta</taxon>
        <taxon>Embryophyta</taxon>
        <taxon>Tracheophyta</taxon>
        <taxon>Spermatophyta</taxon>
        <taxon>Magnoliopsida</taxon>
        <taxon>eudicotyledons</taxon>
        <taxon>Gunneridae</taxon>
        <taxon>Pentapetalae</taxon>
        <taxon>asterids</taxon>
        <taxon>lamiids</taxon>
        <taxon>Solanales</taxon>
        <taxon>Solanaceae</taxon>
        <taxon>Solanoideae</taxon>
        <taxon>Solaneae</taxon>
        <taxon>Solanum</taxon>
    </lineage>
</organism>
<evidence type="ECO:0000250" key="1">
    <source>
        <dbReference type="UniProtKB" id="P04037"/>
    </source>
</evidence>
<evidence type="ECO:0000305" key="2"/>
<comment type="function">
    <text evidence="1">Component of the cytochrome c oxidase, the last enzyme in the mitochondrial electron transport chain which drives oxidative phosphorylation. The respiratory chain contains 3 multisubunit complexes succinate dehydrogenase (complex II, CII), ubiquinol-cytochrome c oxidoreductase (cytochrome b-c1 complex, complex III, CIII) and cytochrome c oxidase (complex IV, CIV), that cooperate to transfer electrons derived from NADH and succinate to molecular oxygen, creating an electrochemical gradient over the inner membrane that drives transmembrane transport and the ATP synthase. Cytochrome c oxidase is the component of the respiratory chain that catalyzes the reduction of oxygen to water. Electrons originating from reduced cytochrome c in the intermembrane space (IMS) are transferred via the dinuclear copper A center (CU(A)) of subunit 2 and heme A of subunit 1 to the active site in subunit 1, a binuclear center (BNC) formed by heme A3 and copper B (CU(B)). The BNC reduces molecular oxygen to 2 water molecules using 4 electrons from cytochrome c in the IMS and 4 protons from the mitochondrial matrix.</text>
</comment>
<comment type="pathway">
    <text evidence="1">Energy metabolism; oxidative phosphorylation.</text>
</comment>
<comment type="subunit">
    <text evidence="1">Component of the cytochrome c oxidase (complex IV, CIV), a multisubunit enzyme composed of a catalytic core of 3 subunits and several supernumerary subunits. The complex exists as a monomer or a dimer and forms supercomplexes (SCs) in the inner mitochondrial membrane with ubiquinol-cytochrome c oxidoreductase (cytochrome b-c1 complex, complex III, CIII).</text>
</comment>
<comment type="subcellular location">
    <subcellularLocation>
        <location evidence="1">Mitochondrion inner membrane</location>
        <topology evidence="1">Peripheral membrane protein</topology>
        <orientation evidence="1">Matrix side</orientation>
    </subcellularLocation>
</comment>
<comment type="similarity">
    <text evidence="2">Belongs to the cytochrome c oxidase subunit 5B family.</text>
</comment>
<proteinExistence type="evidence at protein level"/>
<dbReference type="InParanoid" id="P80499"/>
<dbReference type="UniPathway" id="UPA00705"/>
<dbReference type="Proteomes" id="UP000011115">
    <property type="component" value="Unassembled WGS sequence"/>
</dbReference>
<dbReference type="GO" id="GO:0005743">
    <property type="term" value="C:mitochondrial inner membrane"/>
    <property type="evidence" value="ECO:0007669"/>
    <property type="project" value="UniProtKB-SubCell"/>
</dbReference>
<dbReference type="GO" id="GO:0006119">
    <property type="term" value="P:oxidative phosphorylation"/>
    <property type="evidence" value="ECO:0007669"/>
    <property type="project" value="UniProtKB-UniPathway"/>
</dbReference>
<sequence>TVSENVVKKVEDVMPIATGHEREXLXAQ</sequence>
<protein>
    <recommendedName>
        <fullName>Cytochrome c oxidase subunit 5B, mitochondrial</fullName>
    </recommendedName>
    <alternativeName>
        <fullName>Cytochrome c oxidase polypeptide Vb</fullName>
    </alternativeName>
</protein>
<feature type="chain" id="PRO_0000197029" description="Cytochrome c oxidase subunit 5B, mitochondrial">
    <location>
        <begin position="1"/>
        <end position="28" status="greater than"/>
    </location>
</feature>
<feature type="non-terminal residue">
    <location>
        <position position="28"/>
    </location>
</feature>
<accession>P80499</accession>
<keyword id="KW-0903">Direct protein sequencing</keyword>
<keyword id="KW-0472">Membrane</keyword>
<keyword id="KW-0496">Mitochondrion</keyword>
<keyword id="KW-0999">Mitochondrion inner membrane</keyword>
<keyword id="KW-1185">Reference proteome</keyword>